<keyword id="KW-0165">Cleavage on pair of basic residues</keyword>
<keyword id="KW-1015">Disulfide bond</keyword>
<keyword id="KW-0872">Ion channel impairing toxin</keyword>
<keyword id="KW-0960">Knottin</keyword>
<keyword id="KW-0964">Secreted</keyword>
<keyword id="KW-0732">Signal</keyword>
<keyword id="KW-0800">Toxin</keyword>
<reference key="1">
    <citation type="journal article" date="2011" name="J. Biol. Chem.">
        <title>Embryonic toxin expression in the cone snail Conus victoriae: primed to kill or divergent function?</title>
        <authorList>
            <person name="Safavi-Hemami H."/>
            <person name="Siero W.A."/>
            <person name="Kuang Z."/>
            <person name="Williamson N.A."/>
            <person name="Karas J.A."/>
            <person name="Page L.R."/>
            <person name="Macmillan D."/>
            <person name="Callaghan B."/>
            <person name="Kompella S.N."/>
            <person name="Adams D.J."/>
            <person name="Norton R.S."/>
            <person name="Purcell A.W."/>
        </authorList>
    </citation>
    <scope>NUCLEOTIDE SEQUENCE [MRNA]</scope>
    <scope>DEVELOPMENTAL STAGE</scope>
    <source>
        <tissue>Embryo</tissue>
        <tissue>Venom duct</tissue>
    </source>
</reference>
<dbReference type="EMBL" id="JF433909">
    <property type="protein sequence ID" value="AEA35365.1"/>
    <property type="molecule type" value="mRNA"/>
</dbReference>
<dbReference type="SMR" id="G1AS82"/>
<dbReference type="ConoServer" id="4277">
    <property type="toxin name" value="Vc6.16 precursor"/>
</dbReference>
<dbReference type="GO" id="GO:0005576">
    <property type="term" value="C:extracellular region"/>
    <property type="evidence" value="ECO:0007669"/>
    <property type="project" value="UniProtKB-SubCell"/>
</dbReference>
<dbReference type="GO" id="GO:0008200">
    <property type="term" value="F:ion channel inhibitor activity"/>
    <property type="evidence" value="ECO:0007669"/>
    <property type="project" value="InterPro"/>
</dbReference>
<dbReference type="GO" id="GO:0090729">
    <property type="term" value="F:toxin activity"/>
    <property type="evidence" value="ECO:0007669"/>
    <property type="project" value="UniProtKB-KW"/>
</dbReference>
<dbReference type="InterPro" id="IPR004214">
    <property type="entry name" value="Conotoxin"/>
</dbReference>
<dbReference type="Pfam" id="PF02950">
    <property type="entry name" value="Conotoxin"/>
    <property type="match status" value="1"/>
</dbReference>
<protein>
    <recommendedName>
        <fullName>Conotoxin Vc6.16</fullName>
    </recommendedName>
</protein>
<sequence>MQKLIILLLVAAVLMSTQALFQEKRPKEKIDLLSKRKTDAEKQQKRYCSDDSQPCSHFYDCCKWSCNNGYCP</sequence>
<accession>G1AS82</accession>
<organism>
    <name type="scientific">Conus victoriae</name>
    <name type="common">Queen Victoria cone</name>
    <dbReference type="NCBI Taxonomy" id="319920"/>
    <lineage>
        <taxon>Eukaryota</taxon>
        <taxon>Metazoa</taxon>
        <taxon>Spiralia</taxon>
        <taxon>Lophotrochozoa</taxon>
        <taxon>Mollusca</taxon>
        <taxon>Gastropoda</taxon>
        <taxon>Caenogastropoda</taxon>
        <taxon>Neogastropoda</taxon>
        <taxon>Conoidea</taxon>
        <taxon>Conidae</taxon>
        <taxon>Conus</taxon>
        <taxon>Cylinder</taxon>
    </lineage>
</organism>
<proteinExistence type="evidence at transcript level"/>
<name>O26G_CONVC</name>
<feature type="signal peptide" evidence="2">
    <location>
        <begin position="1"/>
        <end position="19"/>
    </location>
</feature>
<feature type="propeptide" id="PRO_0000425181" evidence="1">
    <location>
        <begin position="20"/>
        <end position="44"/>
    </location>
</feature>
<feature type="peptide" id="PRO_0000425182" description="Conotoxin Vc6.16">
    <location>
        <begin position="47"/>
        <end position="72"/>
    </location>
</feature>
<feature type="disulfide bond" evidence="1">
    <location>
        <begin position="48"/>
        <end position="62"/>
    </location>
</feature>
<feature type="disulfide bond" evidence="1">
    <location>
        <begin position="55"/>
        <end position="66"/>
    </location>
</feature>
<feature type="disulfide bond" evidence="1">
    <location>
        <begin position="61"/>
        <end position="71"/>
    </location>
</feature>
<evidence type="ECO:0000250" key="1"/>
<evidence type="ECO:0000255" key="2"/>
<evidence type="ECO:0000269" key="3">
    <source>
    </source>
</evidence>
<evidence type="ECO:0000305" key="4"/>
<comment type="function">
    <text evidence="1">Inhibits voltage-gated ion channels.</text>
</comment>
<comment type="subcellular location">
    <subcellularLocation>
        <location evidence="1">Secreted</location>
    </subcellularLocation>
</comment>
<comment type="tissue specificity">
    <text>Expressed by the venom duct.</text>
</comment>
<comment type="developmental stage">
    <text evidence="3">Only expressed in embryos.</text>
</comment>
<comment type="domain">
    <text evidence="1">The presence of a 'disulfide through disulfide knot' structurally defines this protein as a knottin.</text>
</comment>
<comment type="domain">
    <text>The cysteine framework is VI/VII (C-C-CC-C-C).</text>
</comment>
<comment type="similarity">
    <text evidence="4">Belongs to the conotoxin O2 superfamily.</text>
</comment>